<comment type="function">
    <text evidence="1">Cell division protein that is part of the divisome complex and is recruited early to the Z-ring. Probably stimulates Z-ring formation, perhaps through the cross-linking of FtsZ protofilaments. Its function overlaps with FtsA.</text>
</comment>
<comment type="subunit">
    <text evidence="1">Homodimer. Interacts with FtsZ.</text>
</comment>
<comment type="subcellular location">
    <subcellularLocation>
        <location evidence="1">Cytoplasm</location>
    </subcellularLocation>
    <text evidence="1">Localizes to the division site, in a FtsZ-dependent manner.</text>
</comment>
<comment type="similarity">
    <text evidence="1">Belongs to the SepF family.</text>
</comment>
<keyword id="KW-0131">Cell cycle</keyword>
<keyword id="KW-0132">Cell division</keyword>
<keyword id="KW-0963">Cytoplasm</keyword>
<keyword id="KW-0717">Septation</keyword>
<feature type="chain" id="PRO_0000334089" description="Cell division protein SepF">
    <location>
        <begin position="1"/>
        <end position="197"/>
    </location>
</feature>
<feature type="region of interest" description="Disordered" evidence="2">
    <location>
        <begin position="15"/>
        <end position="91"/>
    </location>
</feature>
<feature type="compositionally biased region" description="Basic and acidic residues" evidence="2">
    <location>
        <begin position="22"/>
        <end position="31"/>
    </location>
</feature>
<feature type="compositionally biased region" description="Low complexity" evidence="2">
    <location>
        <begin position="37"/>
        <end position="47"/>
    </location>
</feature>
<feature type="compositionally biased region" description="Polar residues" evidence="2">
    <location>
        <begin position="48"/>
        <end position="58"/>
    </location>
</feature>
<feature type="compositionally biased region" description="Polar residues" evidence="2">
    <location>
        <begin position="78"/>
        <end position="91"/>
    </location>
</feature>
<evidence type="ECO:0000255" key="1">
    <source>
        <dbReference type="HAMAP-Rule" id="MF_01197"/>
    </source>
</evidence>
<evidence type="ECO:0000256" key="2">
    <source>
        <dbReference type="SAM" id="MobiDB-lite"/>
    </source>
</evidence>
<reference key="1">
    <citation type="journal article" date="2005" name="J. Bacteriol.">
        <title>Whole-genome sequencing of Staphylococcus haemolyticus uncovers the extreme plasticity of its genome and the evolution of human-colonizing staphylococcal species.</title>
        <authorList>
            <person name="Takeuchi F."/>
            <person name="Watanabe S."/>
            <person name="Baba T."/>
            <person name="Yuzawa H."/>
            <person name="Ito T."/>
            <person name="Morimoto Y."/>
            <person name="Kuroda M."/>
            <person name="Cui L."/>
            <person name="Takahashi M."/>
            <person name="Ankai A."/>
            <person name="Baba S."/>
            <person name="Fukui S."/>
            <person name="Lee J.C."/>
            <person name="Hiramatsu K."/>
        </authorList>
    </citation>
    <scope>NUCLEOTIDE SEQUENCE [LARGE SCALE GENOMIC DNA]</scope>
    <source>
        <strain>JCSC1435</strain>
    </source>
</reference>
<proteinExistence type="inferred from homology"/>
<sequence length="197" mass="22739">MAIKDLFNNFFLMDDEEEVESPEERQRRVVQNEENETNNVQQNQPQQSERSYSNQSKLKTVPQKKTTRNYNSEERNVRMNQPPSKSNGKNVVTMNQTSQSYSGYESSKMCLFEPRVFSDTQDIADELKNRRATLVNLQRIDKISAKRIIDFLSGTVYAIGGDIQRVGTDIFLCTPDNVEVAGSITDHIEQMESQHYE</sequence>
<gene>
    <name evidence="1" type="primary">sepF</name>
    <name type="ordered locus">SH1726</name>
</gene>
<organism>
    <name type="scientific">Staphylococcus haemolyticus (strain JCSC1435)</name>
    <dbReference type="NCBI Taxonomy" id="279808"/>
    <lineage>
        <taxon>Bacteria</taxon>
        <taxon>Bacillati</taxon>
        <taxon>Bacillota</taxon>
        <taxon>Bacilli</taxon>
        <taxon>Bacillales</taxon>
        <taxon>Staphylococcaceae</taxon>
        <taxon>Staphylococcus</taxon>
    </lineage>
</organism>
<dbReference type="EMBL" id="AP006716">
    <property type="protein sequence ID" value="BAE05035.1"/>
    <property type="molecule type" value="Genomic_DNA"/>
</dbReference>
<dbReference type="RefSeq" id="WP_011276011.1">
    <property type="nucleotide sequence ID" value="NC_007168.1"/>
</dbReference>
<dbReference type="SMR" id="Q4L5P0"/>
<dbReference type="KEGG" id="sha:SH1726"/>
<dbReference type="eggNOG" id="COG1799">
    <property type="taxonomic scope" value="Bacteria"/>
</dbReference>
<dbReference type="HOGENOM" id="CLU_078499_4_1_9"/>
<dbReference type="OrthoDB" id="9815206at2"/>
<dbReference type="Proteomes" id="UP000000543">
    <property type="component" value="Chromosome"/>
</dbReference>
<dbReference type="GO" id="GO:0005737">
    <property type="term" value="C:cytoplasm"/>
    <property type="evidence" value="ECO:0007669"/>
    <property type="project" value="UniProtKB-SubCell"/>
</dbReference>
<dbReference type="GO" id="GO:0000917">
    <property type="term" value="P:division septum assembly"/>
    <property type="evidence" value="ECO:0007669"/>
    <property type="project" value="UniProtKB-KW"/>
</dbReference>
<dbReference type="GO" id="GO:0043093">
    <property type="term" value="P:FtsZ-dependent cytokinesis"/>
    <property type="evidence" value="ECO:0007669"/>
    <property type="project" value="UniProtKB-UniRule"/>
</dbReference>
<dbReference type="Gene3D" id="3.30.110.150">
    <property type="entry name" value="SepF-like protein"/>
    <property type="match status" value="1"/>
</dbReference>
<dbReference type="HAMAP" id="MF_01197">
    <property type="entry name" value="SepF"/>
    <property type="match status" value="1"/>
</dbReference>
<dbReference type="InterPro" id="IPR023052">
    <property type="entry name" value="Cell_div_SepF"/>
</dbReference>
<dbReference type="InterPro" id="IPR007561">
    <property type="entry name" value="Cell_div_SepF/SepF-rel"/>
</dbReference>
<dbReference type="InterPro" id="IPR038594">
    <property type="entry name" value="SepF-like_sf"/>
</dbReference>
<dbReference type="PANTHER" id="PTHR35798">
    <property type="entry name" value="CELL DIVISION PROTEIN SEPF"/>
    <property type="match status" value="1"/>
</dbReference>
<dbReference type="PANTHER" id="PTHR35798:SF1">
    <property type="entry name" value="CELL DIVISION PROTEIN SEPF"/>
    <property type="match status" value="1"/>
</dbReference>
<dbReference type="Pfam" id="PF04472">
    <property type="entry name" value="SepF"/>
    <property type="match status" value="1"/>
</dbReference>
<protein>
    <recommendedName>
        <fullName evidence="1">Cell division protein SepF</fullName>
    </recommendedName>
</protein>
<accession>Q4L5P0</accession>
<name>SEPF_STAHJ</name>